<sequence>MPDYRSKTSTQGRNMAGARALWRATGMKDEDFKKPIIAIANSFTQFVPGHVHLKDLGQLVAREIERAGGVAKEFNTIAVDDGIAMGHDGMLYSLPSREIIADAVEYMVNAHCADAIVCISNCDKITPGMLMAALRLNIPVIFVSGGPMEAGKTKLASHGLDLVDAMVIAADSSASDEKVAEYERSACPTCGSCSGMFTANSMNCLTEALGLALPGNGSTLATHADREQLFLTAGRTIVELCKRYYGENDDSVLPRSIANFKAFENAMMLDIAMGGSTNTILHLLAAAQEGEVAFDLRDIDRLSRKVPQLCKVAPNIQKYHMEDVHRAGGIFSILGSLARGGLLHTDLPTVHSRSMEEAIAKWDITQTDDEAVHTFFKAGPAGIPTQTAFSQSTRWETLDDDRENGCIRSFEHAYSQEGGLAVLYGNIALDGCVVKTAGVDESIHVFEGNAKIFESQDSAVRGILADEVKAGDIVIIRYEGPKGGPGMQEMLYPTSYLKSKGLGKACALLTDGRFSGGTSGLSIGHASPEAAAGGAIGLVRDGDKVLIDIPNRSINLQVSDEELAARRVEQDKKGWKPAEVRPRKVTTALKAYALLATSADKGAVRNKAMLEGL</sequence>
<reference key="1">
    <citation type="submission" date="2008-02" db="EMBL/GenBank/DDBJ databases">
        <title>Complete sequence of Pseudomonas putida W619.</title>
        <authorList>
            <person name="Copeland A."/>
            <person name="Lucas S."/>
            <person name="Lapidus A."/>
            <person name="Barry K."/>
            <person name="Detter J.C."/>
            <person name="Glavina del Rio T."/>
            <person name="Dalin E."/>
            <person name="Tice H."/>
            <person name="Pitluck S."/>
            <person name="Chain P."/>
            <person name="Malfatti S."/>
            <person name="Shin M."/>
            <person name="Vergez L."/>
            <person name="Schmutz J."/>
            <person name="Larimer F."/>
            <person name="Land M."/>
            <person name="Hauser L."/>
            <person name="Kyrpides N."/>
            <person name="Kim E."/>
            <person name="Taghavi S."/>
            <person name="Vangronsveld D."/>
            <person name="van der Lelie D."/>
            <person name="Richardson P."/>
        </authorList>
    </citation>
    <scope>NUCLEOTIDE SEQUENCE [LARGE SCALE GENOMIC DNA]</scope>
    <source>
        <strain>W619</strain>
    </source>
</reference>
<keyword id="KW-0001">2Fe-2S</keyword>
<keyword id="KW-0028">Amino-acid biosynthesis</keyword>
<keyword id="KW-0100">Branched-chain amino acid biosynthesis</keyword>
<keyword id="KW-0408">Iron</keyword>
<keyword id="KW-0411">Iron-sulfur</keyword>
<keyword id="KW-0456">Lyase</keyword>
<keyword id="KW-0460">Magnesium</keyword>
<keyword id="KW-0479">Metal-binding</keyword>
<comment type="function">
    <text evidence="1">Functions in the biosynthesis of branched-chain amino acids. Catalyzes the dehydration of (2R,3R)-2,3-dihydroxy-3-methylpentanoate (2,3-dihydroxy-3-methylvalerate) into 2-oxo-3-methylpentanoate (2-oxo-3-methylvalerate) and of (2R)-2,3-dihydroxy-3-methylbutanoate (2,3-dihydroxyisovalerate) into 2-oxo-3-methylbutanoate (2-oxoisovalerate), the penultimate precursor to L-isoleucine and L-valine, respectively.</text>
</comment>
<comment type="catalytic activity">
    <reaction evidence="1">
        <text>(2R)-2,3-dihydroxy-3-methylbutanoate = 3-methyl-2-oxobutanoate + H2O</text>
        <dbReference type="Rhea" id="RHEA:24809"/>
        <dbReference type="ChEBI" id="CHEBI:11851"/>
        <dbReference type="ChEBI" id="CHEBI:15377"/>
        <dbReference type="ChEBI" id="CHEBI:49072"/>
        <dbReference type="EC" id="4.2.1.9"/>
    </reaction>
    <physiologicalReaction direction="left-to-right" evidence="1">
        <dbReference type="Rhea" id="RHEA:24810"/>
    </physiologicalReaction>
</comment>
<comment type="catalytic activity">
    <reaction evidence="1">
        <text>(2R,3R)-2,3-dihydroxy-3-methylpentanoate = (S)-3-methyl-2-oxopentanoate + H2O</text>
        <dbReference type="Rhea" id="RHEA:27694"/>
        <dbReference type="ChEBI" id="CHEBI:15377"/>
        <dbReference type="ChEBI" id="CHEBI:35146"/>
        <dbReference type="ChEBI" id="CHEBI:49258"/>
        <dbReference type="EC" id="4.2.1.9"/>
    </reaction>
    <physiologicalReaction direction="left-to-right" evidence="1">
        <dbReference type="Rhea" id="RHEA:27695"/>
    </physiologicalReaction>
</comment>
<comment type="cofactor">
    <cofactor evidence="1">
        <name>[2Fe-2S] cluster</name>
        <dbReference type="ChEBI" id="CHEBI:190135"/>
    </cofactor>
    <text evidence="1">Binds 1 [2Fe-2S] cluster per subunit. This cluster acts as a Lewis acid cofactor.</text>
</comment>
<comment type="cofactor">
    <cofactor evidence="1">
        <name>Mg(2+)</name>
        <dbReference type="ChEBI" id="CHEBI:18420"/>
    </cofactor>
</comment>
<comment type="pathway">
    <text evidence="1">Amino-acid biosynthesis; L-isoleucine biosynthesis; L-isoleucine from 2-oxobutanoate: step 3/4.</text>
</comment>
<comment type="pathway">
    <text evidence="1">Amino-acid biosynthesis; L-valine biosynthesis; L-valine from pyruvate: step 3/4.</text>
</comment>
<comment type="subunit">
    <text evidence="1">Homodimer.</text>
</comment>
<comment type="similarity">
    <text evidence="1">Belongs to the IlvD/Edd family.</text>
</comment>
<feature type="chain" id="PRO_1000089401" description="Dihydroxy-acid dehydratase">
    <location>
        <begin position="1"/>
        <end position="613"/>
    </location>
</feature>
<feature type="active site" description="Proton acceptor" evidence="1">
    <location>
        <position position="515"/>
    </location>
</feature>
<feature type="binding site" evidence="1">
    <location>
        <position position="81"/>
    </location>
    <ligand>
        <name>Mg(2+)</name>
        <dbReference type="ChEBI" id="CHEBI:18420"/>
    </ligand>
</feature>
<feature type="binding site" evidence="1">
    <location>
        <position position="122"/>
    </location>
    <ligand>
        <name>[2Fe-2S] cluster</name>
        <dbReference type="ChEBI" id="CHEBI:190135"/>
    </ligand>
</feature>
<feature type="binding site" evidence="1">
    <location>
        <position position="123"/>
    </location>
    <ligand>
        <name>Mg(2+)</name>
        <dbReference type="ChEBI" id="CHEBI:18420"/>
    </ligand>
</feature>
<feature type="binding site" description="via carbamate group" evidence="1">
    <location>
        <position position="124"/>
    </location>
    <ligand>
        <name>Mg(2+)</name>
        <dbReference type="ChEBI" id="CHEBI:18420"/>
    </ligand>
</feature>
<feature type="binding site" evidence="1">
    <location>
        <position position="193"/>
    </location>
    <ligand>
        <name>[2Fe-2S] cluster</name>
        <dbReference type="ChEBI" id="CHEBI:190135"/>
    </ligand>
</feature>
<feature type="binding site" evidence="1">
    <location>
        <position position="489"/>
    </location>
    <ligand>
        <name>Mg(2+)</name>
        <dbReference type="ChEBI" id="CHEBI:18420"/>
    </ligand>
</feature>
<feature type="modified residue" description="N6-carboxylysine" evidence="1">
    <location>
        <position position="124"/>
    </location>
</feature>
<protein>
    <recommendedName>
        <fullName evidence="1">Dihydroxy-acid dehydratase</fullName>
        <shortName evidence="1">DAD</shortName>
        <ecNumber evidence="1">4.2.1.9</ecNumber>
    </recommendedName>
</protein>
<evidence type="ECO:0000255" key="1">
    <source>
        <dbReference type="HAMAP-Rule" id="MF_00012"/>
    </source>
</evidence>
<organism>
    <name type="scientific">Pseudomonas putida (strain W619)</name>
    <dbReference type="NCBI Taxonomy" id="390235"/>
    <lineage>
        <taxon>Bacteria</taxon>
        <taxon>Pseudomonadati</taxon>
        <taxon>Pseudomonadota</taxon>
        <taxon>Gammaproteobacteria</taxon>
        <taxon>Pseudomonadales</taxon>
        <taxon>Pseudomonadaceae</taxon>
        <taxon>Pseudomonas</taxon>
    </lineage>
</organism>
<accession>B1J2M0</accession>
<proteinExistence type="inferred from homology"/>
<name>ILVD_PSEPW</name>
<gene>
    <name evidence="1" type="primary">ilvD</name>
    <name type="ordered locus">PputW619_0336</name>
</gene>
<dbReference type="EC" id="4.2.1.9" evidence="1"/>
<dbReference type="EMBL" id="CP000949">
    <property type="protein sequence ID" value="ACA70842.1"/>
    <property type="molecule type" value="Genomic_DNA"/>
</dbReference>
<dbReference type="SMR" id="B1J2M0"/>
<dbReference type="STRING" id="390235.PputW619_0336"/>
<dbReference type="KEGG" id="ppw:PputW619_0336"/>
<dbReference type="eggNOG" id="COG0129">
    <property type="taxonomic scope" value="Bacteria"/>
</dbReference>
<dbReference type="HOGENOM" id="CLU_014271_4_3_6"/>
<dbReference type="OrthoDB" id="9807077at2"/>
<dbReference type="UniPathway" id="UPA00047">
    <property type="reaction ID" value="UER00057"/>
</dbReference>
<dbReference type="UniPathway" id="UPA00049">
    <property type="reaction ID" value="UER00061"/>
</dbReference>
<dbReference type="GO" id="GO:0005829">
    <property type="term" value="C:cytosol"/>
    <property type="evidence" value="ECO:0007669"/>
    <property type="project" value="TreeGrafter"/>
</dbReference>
<dbReference type="GO" id="GO:0051537">
    <property type="term" value="F:2 iron, 2 sulfur cluster binding"/>
    <property type="evidence" value="ECO:0007669"/>
    <property type="project" value="UniProtKB-UniRule"/>
</dbReference>
<dbReference type="GO" id="GO:0004160">
    <property type="term" value="F:dihydroxy-acid dehydratase activity"/>
    <property type="evidence" value="ECO:0007669"/>
    <property type="project" value="UniProtKB-UniRule"/>
</dbReference>
<dbReference type="GO" id="GO:0000287">
    <property type="term" value="F:magnesium ion binding"/>
    <property type="evidence" value="ECO:0007669"/>
    <property type="project" value="UniProtKB-UniRule"/>
</dbReference>
<dbReference type="GO" id="GO:0009097">
    <property type="term" value="P:isoleucine biosynthetic process"/>
    <property type="evidence" value="ECO:0007669"/>
    <property type="project" value="UniProtKB-UniRule"/>
</dbReference>
<dbReference type="GO" id="GO:0009099">
    <property type="term" value="P:L-valine biosynthetic process"/>
    <property type="evidence" value="ECO:0007669"/>
    <property type="project" value="UniProtKB-UniRule"/>
</dbReference>
<dbReference type="FunFam" id="3.50.30.80:FF:000001">
    <property type="entry name" value="Dihydroxy-acid dehydratase"/>
    <property type="match status" value="1"/>
</dbReference>
<dbReference type="Gene3D" id="3.50.30.80">
    <property type="entry name" value="IlvD/EDD C-terminal domain-like"/>
    <property type="match status" value="1"/>
</dbReference>
<dbReference type="HAMAP" id="MF_00012">
    <property type="entry name" value="IlvD"/>
    <property type="match status" value="1"/>
</dbReference>
<dbReference type="InterPro" id="IPR042096">
    <property type="entry name" value="Dihydro-acid_dehy_C"/>
</dbReference>
<dbReference type="InterPro" id="IPR004404">
    <property type="entry name" value="DihydroxyA_deHydtase"/>
</dbReference>
<dbReference type="InterPro" id="IPR020558">
    <property type="entry name" value="DiOHA_6PGluconate_deHydtase_CS"/>
</dbReference>
<dbReference type="InterPro" id="IPR056740">
    <property type="entry name" value="ILV_EDD_C"/>
</dbReference>
<dbReference type="InterPro" id="IPR000581">
    <property type="entry name" value="ILV_EDD_N"/>
</dbReference>
<dbReference type="InterPro" id="IPR037237">
    <property type="entry name" value="IlvD/EDD_N"/>
</dbReference>
<dbReference type="NCBIfam" id="TIGR00110">
    <property type="entry name" value="ilvD"/>
    <property type="match status" value="1"/>
</dbReference>
<dbReference type="NCBIfam" id="NF009103">
    <property type="entry name" value="PRK12448.1"/>
    <property type="match status" value="1"/>
</dbReference>
<dbReference type="PANTHER" id="PTHR43661">
    <property type="entry name" value="D-XYLONATE DEHYDRATASE"/>
    <property type="match status" value="1"/>
</dbReference>
<dbReference type="PANTHER" id="PTHR43661:SF3">
    <property type="entry name" value="D-XYLONATE DEHYDRATASE YAGF-RELATED"/>
    <property type="match status" value="1"/>
</dbReference>
<dbReference type="Pfam" id="PF24877">
    <property type="entry name" value="ILV_EDD_C"/>
    <property type="match status" value="1"/>
</dbReference>
<dbReference type="Pfam" id="PF00920">
    <property type="entry name" value="ILVD_EDD_N"/>
    <property type="match status" value="1"/>
</dbReference>
<dbReference type="SUPFAM" id="SSF143975">
    <property type="entry name" value="IlvD/EDD N-terminal domain-like"/>
    <property type="match status" value="1"/>
</dbReference>
<dbReference type="SUPFAM" id="SSF52016">
    <property type="entry name" value="LeuD/IlvD-like"/>
    <property type="match status" value="1"/>
</dbReference>
<dbReference type="PROSITE" id="PS00886">
    <property type="entry name" value="ILVD_EDD_1"/>
    <property type="match status" value="1"/>
</dbReference>
<dbReference type="PROSITE" id="PS00887">
    <property type="entry name" value="ILVD_EDD_2"/>
    <property type="match status" value="1"/>
</dbReference>